<organism>
    <name type="scientific">Micrococcus luteus</name>
    <name type="common">Micrococcus lysodeikticus</name>
    <dbReference type="NCBI Taxonomy" id="1270"/>
    <lineage>
        <taxon>Bacteria</taxon>
        <taxon>Bacillati</taxon>
        <taxon>Actinomycetota</taxon>
        <taxon>Actinomycetes</taxon>
        <taxon>Micrococcales</taxon>
        <taxon>Micrococcaceae</taxon>
        <taxon>Micrococcus</taxon>
    </lineage>
</organism>
<comment type="function">
    <text evidence="1">Binds to 23S rRNA. Forms part of two intersubunit bridges in the 70S ribosome.</text>
</comment>
<comment type="subunit">
    <text evidence="1">Part of the 50S ribosomal subunit. Forms a cluster with proteins L3 and L19. In the 70S ribosome, L14 and L19 interact and together make contacts with the 16S rRNA in bridges B5 and B8.</text>
</comment>
<comment type="similarity">
    <text evidence="1">Belongs to the universal ribosomal protein uL14 family.</text>
</comment>
<accession>P33100</accession>
<feature type="chain" id="PRO_0000128548" description="Large ribosomal subunit protein uL14">
    <location>
        <begin position="1"/>
        <end position="122"/>
    </location>
</feature>
<name>RL14_MICLU</name>
<sequence length="122" mass="13298">MIQQESRLKVADNTGAKEILTIRVLGGSGRRYAGIGDTIVATVKDAIPGGNVKKAHVVKAVVVRTRKQSRRPDGSYIKFDENAAVILKTDGEPRGTRIFGPVGRELRDKKFMKIVSLAPEVI</sequence>
<gene>
    <name evidence="1" type="primary">rplN</name>
</gene>
<proteinExistence type="inferred from homology"/>
<dbReference type="EMBL" id="X17524">
    <property type="protein sequence ID" value="CAA35558.1"/>
    <property type="molecule type" value="Genomic_DNA"/>
</dbReference>
<dbReference type="PIR" id="S29882">
    <property type="entry name" value="S29882"/>
</dbReference>
<dbReference type="SMR" id="P33100"/>
<dbReference type="STRING" id="1232675.GCA_000309825_02148"/>
<dbReference type="GO" id="GO:0022625">
    <property type="term" value="C:cytosolic large ribosomal subunit"/>
    <property type="evidence" value="ECO:0007669"/>
    <property type="project" value="TreeGrafter"/>
</dbReference>
<dbReference type="GO" id="GO:0070180">
    <property type="term" value="F:large ribosomal subunit rRNA binding"/>
    <property type="evidence" value="ECO:0007669"/>
    <property type="project" value="TreeGrafter"/>
</dbReference>
<dbReference type="GO" id="GO:0003735">
    <property type="term" value="F:structural constituent of ribosome"/>
    <property type="evidence" value="ECO:0007669"/>
    <property type="project" value="InterPro"/>
</dbReference>
<dbReference type="GO" id="GO:0006412">
    <property type="term" value="P:translation"/>
    <property type="evidence" value="ECO:0007669"/>
    <property type="project" value="UniProtKB-UniRule"/>
</dbReference>
<dbReference type="CDD" id="cd00337">
    <property type="entry name" value="Ribosomal_uL14"/>
    <property type="match status" value="1"/>
</dbReference>
<dbReference type="FunFam" id="2.40.150.20:FF:000001">
    <property type="entry name" value="50S ribosomal protein L14"/>
    <property type="match status" value="1"/>
</dbReference>
<dbReference type="Gene3D" id="2.40.150.20">
    <property type="entry name" value="Ribosomal protein L14"/>
    <property type="match status" value="1"/>
</dbReference>
<dbReference type="HAMAP" id="MF_01367">
    <property type="entry name" value="Ribosomal_uL14"/>
    <property type="match status" value="1"/>
</dbReference>
<dbReference type="InterPro" id="IPR000218">
    <property type="entry name" value="Ribosomal_uL14"/>
</dbReference>
<dbReference type="InterPro" id="IPR005745">
    <property type="entry name" value="Ribosomal_uL14_bac-type"/>
</dbReference>
<dbReference type="InterPro" id="IPR019972">
    <property type="entry name" value="Ribosomal_uL14_CS"/>
</dbReference>
<dbReference type="InterPro" id="IPR036853">
    <property type="entry name" value="Ribosomal_uL14_sf"/>
</dbReference>
<dbReference type="NCBIfam" id="TIGR01067">
    <property type="entry name" value="rplN_bact"/>
    <property type="match status" value="1"/>
</dbReference>
<dbReference type="PANTHER" id="PTHR11761">
    <property type="entry name" value="50S/60S RIBOSOMAL PROTEIN L14/L23"/>
    <property type="match status" value="1"/>
</dbReference>
<dbReference type="PANTHER" id="PTHR11761:SF3">
    <property type="entry name" value="LARGE RIBOSOMAL SUBUNIT PROTEIN UL14M"/>
    <property type="match status" value="1"/>
</dbReference>
<dbReference type="Pfam" id="PF00238">
    <property type="entry name" value="Ribosomal_L14"/>
    <property type="match status" value="1"/>
</dbReference>
<dbReference type="SMART" id="SM01374">
    <property type="entry name" value="Ribosomal_L14"/>
    <property type="match status" value="1"/>
</dbReference>
<dbReference type="SUPFAM" id="SSF50193">
    <property type="entry name" value="Ribosomal protein L14"/>
    <property type="match status" value="1"/>
</dbReference>
<dbReference type="PROSITE" id="PS00049">
    <property type="entry name" value="RIBOSOMAL_L14"/>
    <property type="match status" value="1"/>
</dbReference>
<evidence type="ECO:0000255" key="1">
    <source>
        <dbReference type="HAMAP-Rule" id="MF_01367"/>
    </source>
</evidence>
<evidence type="ECO:0000305" key="2"/>
<protein>
    <recommendedName>
        <fullName evidence="1">Large ribosomal subunit protein uL14</fullName>
    </recommendedName>
    <alternativeName>
        <fullName evidence="2">50S ribosomal protein L14</fullName>
    </alternativeName>
</protein>
<reference key="1">
    <citation type="journal article" date="1989" name="J. Mol. Evol.">
        <title>Spectinomycin operon of Micrococcus luteus: evolutionary implications of organization and novel codon usage.</title>
        <authorList>
            <person name="Ohama T."/>
            <person name="Muto A."/>
            <person name="Osawa S."/>
        </authorList>
    </citation>
    <scope>NUCLEOTIDE SEQUENCE [GENOMIC DNA]</scope>
</reference>
<keyword id="KW-0687">Ribonucleoprotein</keyword>
<keyword id="KW-0689">Ribosomal protein</keyword>
<keyword id="KW-0694">RNA-binding</keyword>
<keyword id="KW-0699">rRNA-binding</keyword>